<name>DCUP_STAAB</name>
<evidence type="ECO:0000255" key="1">
    <source>
        <dbReference type="HAMAP-Rule" id="MF_00218"/>
    </source>
</evidence>
<comment type="function">
    <text evidence="1">Catalyzes the decarboxylation of four acetate groups of uroporphyrinogen-III to yield coproporphyrinogen-III.</text>
</comment>
<comment type="catalytic activity">
    <reaction evidence="1">
        <text>uroporphyrinogen III + 4 H(+) = coproporphyrinogen III + 4 CO2</text>
        <dbReference type="Rhea" id="RHEA:19865"/>
        <dbReference type="ChEBI" id="CHEBI:15378"/>
        <dbReference type="ChEBI" id="CHEBI:16526"/>
        <dbReference type="ChEBI" id="CHEBI:57308"/>
        <dbReference type="ChEBI" id="CHEBI:57309"/>
        <dbReference type="EC" id="4.1.1.37"/>
    </reaction>
</comment>
<comment type="pathway">
    <text evidence="1">Porphyrin-containing compound metabolism; protoporphyrin-IX biosynthesis; coproporphyrinogen-III from 5-aminolevulinate: step 4/4.</text>
</comment>
<comment type="subunit">
    <text evidence="1">Homodimer.</text>
</comment>
<comment type="subcellular location">
    <subcellularLocation>
        <location evidence="1">Cytoplasm</location>
    </subcellularLocation>
</comment>
<comment type="similarity">
    <text evidence="1">Belongs to the uroporphyrinogen decarboxylase family.</text>
</comment>
<keyword id="KW-0963">Cytoplasm</keyword>
<keyword id="KW-0210">Decarboxylase</keyword>
<keyword id="KW-0456">Lyase</keyword>
<keyword id="KW-0627">Porphyrin biosynthesis</keyword>
<accession>Q2YU05</accession>
<organism>
    <name type="scientific">Staphylococcus aureus (strain bovine RF122 / ET3-1)</name>
    <dbReference type="NCBI Taxonomy" id="273036"/>
    <lineage>
        <taxon>Bacteria</taxon>
        <taxon>Bacillati</taxon>
        <taxon>Bacillota</taxon>
        <taxon>Bacilli</taxon>
        <taxon>Bacillales</taxon>
        <taxon>Staphylococcaceae</taxon>
        <taxon>Staphylococcus</taxon>
    </lineage>
</organism>
<sequence length="345" mass="39359">MVHNKNNTILKMIKGEETTHTPVWFMRQAGRSQPEYRKLKEKYSLFDITHQPELCAYVTHLPVDNYHTDAAILYKDIMTPLKPIGVDVEIKSGIGPVIHNPIKTIQDVEKLSQIDPERDVPYVLDTIKLLTEEKLNVPLIGFTGAPFTLASYMIEGGPSKNYNFTKAMMFRDEATWFALMNHLVDVSVKYVTAQVEAGAELIQIFDSWVGALNVEDYRRYIKPHMIRLISEVKEKHDVPVILFGVGASHLINEWNDLPIDVLGLDWRTSINQAQQLGVTKTLQGNLDPSILLAPWNVIEERLKPILDQGMENGKHIFNLGHGVFPEVHPETLRKVSEFVHTYTQR</sequence>
<gene>
    <name evidence="1" type="primary">hemE</name>
    <name type="ordered locus">SAB1765c</name>
</gene>
<proteinExistence type="inferred from homology"/>
<feature type="chain" id="PRO_1000023985" description="Uroporphyrinogen decarboxylase">
    <location>
        <begin position="1"/>
        <end position="345"/>
    </location>
</feature>
<feature type="binding site" evidence="1">
    <location>
        <begin position="27"/>
        <end position="31"/>
    </location>
    <ligand>
        <name>substrate</name>
    </ligand>
</feature>
<feature type="binding site" evidence="1">
    <location>
        <position position="46"/>
    </location>
    <ligand>
        <name>substrate</name>
    </ligand>
</feature>
<feature type="binding site" evidence="1">
    <location>
        <position position="76"/>
    </location>
    <ligand>
        <name>substrate</name>
    </ligand>
</feature>
<feature type="binding site" evidence="1">
    <location>
        <position position="152"/>
    </location>
    <ligand>
        <name>substrate</name>
    </ligand>
</feature>
<feature type="binding site" evidence="1">
    <location>
        <position position="207"/>
    </location>
    <ligand>
        <name>substrate</name>
    </ligand>
</feature>
<feature type="binding site" evidence="1">
    <location>
        <position position="321"/>
    </location>
    <ligand>
        <name>substrate</name>
    </ligand>
</feature>
<feature type="site" description="Transition state stabilizer" evidence="1">
    <location>
        <position position="76"/>
    </location>
</feature>
<protein>
    <recommendedName>
        <fullName evidence="1">Uroporphyrinogen decarboxylase</fullName>
        <shortName evidence="1">UPD</shortName>
        <shortName evidence="1">URO-D</shortName>
        <ecNumber evidence="1">4.1.1.37</ecNumber>
    </recommendedName>
</protein>
<dbReference type="EC" id="4.1.1.37" evidence="1"/>
<dbReference type="EMBL" id="AJ938182">
    <property type="protein sequence ID" value="CAI81454.1"/>
    <property type="molecule type" value="Genomic_DNA"/>
</dbReference>
<dbReference type="RefSeq" id="WP_000233533.1">
    <property type="nucleotide sequence ID" value="NC_007622.1"/>
</dbReference>
<dbReference type="SMR" id="Q2YU05"/>
<dbReference type="KEGG" id="sab:SAB1765c"/>
<dbReference type="HOGENOM" id="CLU_040933_0_1_9"/>
<dbReference type="UniPathway" id="UPA00251">
    <property type="reaction ID" value="UER00321"/>
</dbReference>
<dbReference type="GO" id="GO:0005829">
    <property type="term" value="C:cytosol"/>
    <property type="evidence" value="ECO:0007669"/>
    <property type="project" value="TreeGrafter"/>
</dbReference>
<dbReference type="GO" id="GO:0004853">
    <property type="term" value="F:uroporphyrinogen decarboxylase activity"/>
    <property type="evidence" value="ECO:0007669"/>
    <property type="project" value="UniProtKB-UniRule"/>
</dbReference>
<dbReference type="GO" id="GO:0006782">
    <property type="term" value="P:protoporphyrinogen IX biosynthetic process"/>
    <property type="evidence" value="ECO:0007669"/>
    <property type="project" value="UniProtKB-UniRule"/>
</dbReference>
<dbReference type="CDD" id="cd00717">
    <property type="entry name" value="URO-D"/>
    <property type="match status" value="1"/>
</dbReference>
<dbReference type="FunFam" id="3.20.20.210:FF:000005">
    <property type="entry name" value="Uroporphyrinogen decarboxylase"/>
    <property type="match status" value="1"/>
</dbReference>
<dbReference type="Gene3D" id="3.20.20.210">
    <property type="match status" value="1"/>
</dbReference>
<dbReference type="HAMAP" id="MF_00218">
    <property type="entry name" value="URO_D"/>
    <property type="match status" value="1"/>
</dbReference>
<dbReference type="InterPro" id="IPR038071">
    <property type="entry name" value="UROD/MetE-like_sf"/>
</dbReference>
<dbReference type="InterPro" id="IPR006361">
    <property type="entry name" value="Uroporphyrinogen_deCO2ase_HemE"/>
</dbReference>
<dbReference type="InterPro" id="IPR000257">
    <property type="entry name" value="Uroporphyrinogen_deCOase"/>
</dbReference>
<dbReference type="NCBIfam" id="TIGR01464">
    <property type="entry name" value="hemE"/>
    <property type="match status" value="1"/>
</dbReference>
<dbReference type="PANTHER" id="PTHR21091">
    <property type="entry name" value="METHYLTETRAHYDROFOLATE:HOMOCYSTEINE METHYLTRANSFERASE RELATED"/>
    <property type="match status" value="1"/>
</dbReference>
<dbReference type="PANTHER" id="PTHR21091:SF169">
    <property type="entry name" value="UROPORPHYRINOGEN DECARBOXYLASE"/>
    <property type="match status" value="1"/>
</dbReference>
<dbReference type="Pfam" id="PF01208">
    <property type="entry name" value="URO-D"/>
    <property type="match status" value="1"/>
</dbReference>
<dbReference type="SUPFAM" id="SSF51726">
    <property type="entry name" value="UROD/MetE-like"/>
    <property type="match status" value="1"/>
</dbReference>
<dbReference type="PROSITE" id="PS00906">
    <property type="entry name" value="UROD_1"/>
    <property type="match status" value="1"/>
</dbReference>
<dbReference type="PROSITE" id="PS00907">
    <property type="entry name" value="UROD_2"/>
    <property type="match status" value="1"/>
</dbReference>
<reference key="1">
    <citation type="journal article" date="2007" name="PLoS ONE">
        <title>Molecular correlates of host specialization in Staphylococcus aureus.</title>
        <authorList>
            <person name="Herron-Olson L."/>
            <person name="Fitzgerald J.R."/>
            <person name="Musser J.M."/>
            <person name="Kapur V."/>
        </authorList>
    </citation>
    <scope>NUCLEOTIDE SEQUENCE [LARGE SCALE GENOMIC DNA]</scope>
    <source>
        <strain>bovine RF122 / ET3-1</strain>
    </source>
</reference>